<name>STIG1_TOBAC</name>
<accession>Q40579</accession>
<evidence type="ECO:0000255" key="1"/>
<evidence type="ECO:0000255" key="2">
    <source>
        <dbReference type="PROSITE-ProRule" id="PRU00498"/>
    </source>
</evidence>
<evidence type="ECO:0000269" key="3">
    <source>
    </source>
</evidence>
<evidence type="ECO:0000269" key="4">
    <source>
    </source>
</evidence>
<evidence type="ECO:0000303" key="5">
    <source>
    </source>
</evidence>
<evidence type="ECO:0000305" key="6"/>
<evidence type="ECO:0000305" key="7">
    <source>
    </source>
</evidence>
<evidence type="ECO:0000312" key="8">
    <source>
        <dbReference type="EMBL" id="CAA54838.1"/>
    </source>
</evidence>
<comment type="function">
    <text evidence="3">Involved in the temporal regulation of the exudate secretion onto the stigma.</text>
</comment>
<comment type="subcellular location">
    <subcellularLocation>
        <location evidence="7">Secreted</location>
    </subcellularLocation>
</comment>
<comment type="tissue specificity">
    <text evidence="4">Expressed exclusively in the stigmatic secretory zone.</text>
</comment>
<comment type="developmental stage">
    <text evidence="4">Expressed early during pistil development.</text>
</comment>
<comment type="PTM">
    <text evidence="7">Glycosylated.</text>
</comment>
<comment type="disruption phenotype">
    <text evidence="3">No visible phenotype. Increased exudate production by the mature stigmas, but no effects on pollen tube germination, pollen tube growth or seed set.</text>
</comment>
<comment type="similarity">
    <text evidence="6">Belongs to the STIG1 family.</text>
</comment>
<protein>
    <recommendedName>
        <fullName evidence="5">Protein STIG1</fullName>
    </recommendedName>
    <alternativeName>
        <fullName evidence="5">Stigma-specific protein STIG1</fullName>
    </alternativeName>
</protein>
<organism evidence="8">
    <name type="scientific">Nicotiana tabacum</name>
    <name type="common">Common tobacco</name>
    <dbReference type="NCBI Taxonomy" id="4097"/>
    <lineage>
        <taxon>Eukaryota</taxon>
        <taxon>Viridiplantae</taxon>
        <taxon>Streptophyta</taxon>
        <taxon>Embryophyta</taxon>
        <taxon>Tracheophyta</taxon>
        <taxon>Spermatophyta</taxon>
        <taxon>Magnoliopsida</taxon>
        <taxon>eudicotyledons</taxon>
        <taxon>Gunneridae</taxon>
        <taxon>Pentapetalae</taxon>
        <taxon>asterids</taxon>
        <taxon>lamiids</taxon>
        <taxon>Solanales</taxon>
        <taxon>Solanaceae</taxon>
        <taxon>Nicotianoideae</taxon>
        <taxon>Nicotianeae</taxon>
        <taxon>Nicotiana</taxon>
    </lineage>
</organism>
<reference key="1">
    <citation type="journal article" date="1994" name="EMBO J.">
        <title>Female sterile tobacco plants are produced by stigma-specific cell ablation.</title>
        <authorList>
            <person name="Goldman M.H."/>
            <person name="Goldberg R.B."/>
            <person name="Mariani C."/>
        </authorList>
    </citation>
    <scope>NUCLEOTIDE SEQUENCE [GENOMIC DNA]</scope>
    <scope>TISSUE SPECIFICITY</scope>
    <scope>DEVELOPMENTAL STAGE</scope>
    <source>
        <strain>cv. Samsun</strain>
    </source>
</reference>
<reference key="2">
    <citation type="journal article" date="2005" name="Plant Physiol.">
        <title>STIG1 controls exudate secretion in the pistil of petunia and tobacco.</title>
        <authorList>
            <person name="Verhoeven T."/>
            <person name="Feron R."/>
            <person name="Wolters-Arts M."/>
            <person name="Edqvist J."/>
            <person name="Gerats T."/>
            <person name="Derksen J."/>
            <person name="Mariani C."/>
        </authorList>
    </citation>
    <scope>FUNCTION</scope>
    <scope>IDENTIFICATION BY MASS SPECTROMETRY</scope>
    <scope>DISRUPTION PHENOTYPE</scope>
</reference>
<gene>
    <name evidence="5" type="primary">STIG1</name>
</gene>
<dbReference type="EMBL" id="X77823">
    <property type="protein sequence ID" value="CAA54838.1"/>
    <property type="molecule type" value="Genomic_DNA"/>
</dbReference>
<dbReference type="PIR" id="S46368">
    <property type="entry name" value="S46368"/>
</dbReference>
<dbReference type="RefSeq" id="XP_016455034.1">
    <property type="nucleotide sequence ID" value="XM_016599548.1"/>
</dbReference>
<dbReference type="STRING" id="4097.Q40579"/>
<dbReference type="GlyCosmos" id="Q40579">
    <property type="glycosylation" value="3 sites, No reported glycans"/>
</dbReference>
<dbReference type="PaxDb" id="4097-Q40579"/>
<dbReference type="KEGG" id="nta:107779181"/>
<dbReference type="OMA" id="FPRICYF"/>
<dbReference type="OrthoDB" id="2013942at2759"/>
<dbReference type="Proteomes" id="UP000084051">
    <property type="component" value="Unplaced"/>
</dbReference>
<dbReference type="GO" id="GO:0005576">
    <property type="term" value="C:extracellular region"/>
    <property type="evidence" value="ECO:0007669"/>
    <property type="project" value="UniProtKB-SubCell"/>
</dbReference>
<dbReference type="InterPro" id="IPR006969">
    <property type="entry name" value="Stig-like"/>
</dbReference>
<dbReference type="PANTHER" id="PTHR33227:SF54">
    <property type="entry name" value="PROTEIN STIG1"/>
    <property type="match status" value="1"/>
</dbReference>
<dbReference type="PANTHER" id="PTHR33227">
    <property type="entry name" value="STIGMA-SPECIFIC STIG1-LIKE PROTEIN 3"/>
    <property type="match status" value="1"/>
</dbReference>
<dbReference type="Pfam" id="PF04885">
    <property type="entry name" value="Stig1"/>
    <property type="match status" value="1"/>
</dbReference>
<sequence>MAFINLLILIILTLSSTPITTMSIPETNRRNATTNSYTDVALSARKGAFPPPRKLGEYSTNSTDYNLICKTCKRLSERNTCCFNYSCVDVSTNRFNCGSCGLVCNLGTRCCGGICVDIQKDNGNCGKCSNVCSPGQKCSFGFCDYA</sequence>
<keyword id="KW-0325">Glycoprotein</keyword>
<keyword id="KW-1185">Reference proteome</keyword>
<keyword id="KW-0964">Secreted</keyword>
<keyword id="KW-0732">Signal</keyword>
<proteinExistence type="evidence at protein level"/>
<feature type="signal peptide" evidence="1">
    <location>
        <begin position="1"/>
        <end position="23"/>
    </location>
</feature>
<feature type="chain" id="PRO_0000431928" description="Protein STIG1" evidence="1">
    <location>
        <begin position="24"/>
        <end position="146"/>
    </location>
</feature>
<feature type="glycosylation site" description="N-linked (GlcNAc...) asparagine" evidence="2">
    <location>
        <position position="31"/>
    </location>
</feature>
<feature type="glycosylation site" description="N-linked (GlcNAc...) asparagine" evidence="2">
    <location>
        <position position="61"/>
    </location>
</feature>
<feature type="glycosylation site" description="N-linked (GlcNAc...) asparagine" evidence="2">
    <location>
        <position position="84"/>
    </location>
</feature>